<dbReference type="EMBL" id="AC245291">
    <property type="status" value="NOT_ANNOTATED_CDS"/>
    <property type="molecule type" value="Genomic_DNA"/>
</dbReference>
<dbReference type="SMR" id="A0A087WSX0"/>
<dbReference type="FunCoup" id="A0A087WSX0">
    <property type="interactions" value="280"/>
</dbReference>
<dbReference type="IMGT_GENE-DB" id="IGLV5-45"/>
<dbReference type="BioMuta" id="IGLV5-45"/>
<dbReference type="MassIVE" id="A0A087WSX0"/>
<dbReference type="Ensembl" id="ENST00000390296.2">
    <property type="protein sequence ID" value="ENSP00000374831.2"/>
    <property type="gene ID" value="ENSG00000211650.2"/>
</dbReference>
<dbReference type="UCSC" id="uc062cbs.1">
    <property type="organism name" value="human"/>
</dbReference>
<dbReference type="AGR" id="HGNC:5924"/>
<dbReference type="GeneCards" id="IGLV5-45"/>
<dbReference type="HGNC" id="HGNC:5924">
    <property type="gene designation" value="IGLV5-45"/>
</dbReference>
<dbReference type="HPA" id="ENSG00000211650">
    <property type="expression patterns" value="Tissue enhanced (esophagus, salivary gland, urinary bladder)"/>
</dbReference>
<dbReference type="neXtProt" id="NX_A0A087WSX0"/>
<dbReference type="OpenTargets" id="ENSG00000211650"/>
<dbReference type="VEuPathDB" id="HostDB:ENSG00000211650"/>
<dbReference type="GeneTree" id="ENSGT00940000153520"/>
<dbReference type="HOGENOM" id="CLU_077975_4_0_1"/>
<dbReference type="InParanoid" id="A0A087WSX0"/>
<dbReference type="OMA" id="GYTIHWY"/>
<dbReference type="PAN-GO" id="A0A087WSX0">
    <property type="GO annotations" value="3 GO annotations based on evolutionary models"/>
</dbReference>
<dbReference type="SignaLink" id="A0A087WSX0"/>
<dbReference type="Pharos" id="A0A087WSX0">
    <property type="development level" value="Tdark"/>
</dbReference>
<dbReference type="PRO" id="PR:A0A087WSX0"/>
<dbReference type="Proteomes" id="UP000005640">
    <property type="component" value="Chromosome 22"/>
</dbReference>
<dbReference type="RNAct" id="A0A087WSX0">
    <property type="molecule type" value="protein"/>
</dbReference>
<dbReference type="Bgee" id="ENSG00000211650">
    <property type="expression patterns" value="Expressed in duodenum and 83 other cell types or tissues"/>
</dbReference>
<dbReference type="GO" id="GO:0005576">
    <property type="term" value="C:extracellular region"/>
    <property type="evidence" value="ECO:0007669"/>
    <property type="project" value="UniProtKB-SubCell"/>
</dbReference>
<dbReference type="GO" id="GO:0019814">
    <property type="term" value="C:immunoglobulin complex"/>
    <property type="evidence" value="ECO:0000318"/>
    <property type="project" value="GO_Central"/>
</dbReference>
<dbReference type="GO" id="GO:0005886">
    <property type="term" value="C:plasma membrane"/>
    <property type="evidence" value="ECO:0007669"/>
    <property type="project" value="UniProtKB-SubCell"/>
</dbReference>
<dbReference type="GO" id="GO:0002250">
    <property type="term" value="P:adaptive immune response"/>
    <property type="evidence" value="ECO:0007669"/>
    <property type="project" value="UniProtKB-KW"/>
</dbReference>
<dbReference type="GO" id="GO:0006955">
    <property type="term" value="P:immune response"/>
    <property type="evidence" value="ECO:0000318"/>
    <property type="project" value="GO_Central"/>
</dbReference>
<dbReference type="FunFam" id="2.60.40.10:FF:000721">
    <property type="entry name" value="Immunoglobulin lambda variable 5-45"/>
    <property type="match status" value="1"/>
</dbReference>
<dbReference type="Gene3D" id="2.60.40.10">
    <property type="entry name" value="Immunoglobulins"/>
    <property type="match status" value="1"/>
</dbReference>
<dbReference type="InterPro" id="IPR007110">
    <property type="entry name" value="Ig-like_dom"/>
</dbReference>
<dbReference type="InterPro" id="IPR036179">
    <property type="entry name" value="Ig-like_dom_sf"/>
</dbReference>
<dbReference type="InterPro" id="IPR013783">
    <property type="entry name" value="Ig-like_fold"/>
</dbReference>
<dbReference type="InterPro" id="IPR003599">
    <property type="entry name" value="Ig_sub"/>
</dbReference>
<dbReference type="InterPro" id="IPR013106">
    <property type="entry name" value="Ig_V-set"/>
</dbReference>
<dbReference type="InterPro" id="IPR050150">
    <property type="entry name" value="IgV_Light_Chain"/>
</dbReference>
<dbReference type="PANTHER" id="PTHR23267">
    <property type="entry name" value="IMMUNOGLOBULIN LIGHT CHAIN"/>
    <property type="match status" value="1"/>
</dbReference>
<dbReference type="Pfam" id="PF07686">
    <property type="entry name" value="V-set"/>
    <property type="match status" value="1"/>
</dbReference>
<dbReference type="SMART" id="SM00409">
    <property type="entry name" value="IG"/>
    <property type="match status" value="1"/>
</dbReference>
<dbReference type="SMART" id="SM00406">
    <property type="entry name" value="IGv"/>
    <property type="match status" value="1"/>
</dbReference>
<dbReference type="SUPFAM" id="SSF48726">
    <property type="entry name" value="Immunoglobulin"/>
    <property type="match status" value="1"/>
</dbReference>
<dbReference type="PROSITE" id="PS50835">
    <property type="entry name" value="IG_LIKE"/>
    <property type="match status" value="1"/>
</dbReference>
<proteinExistence type="evidence at protein level"/>
<name>LV545_HUMAN</name>
<protein>
    <recommendedName>
        <fullName evidence="5 10">Immunoglobulin lambda variable 5-45</fullName>
    </recommendedName>
</protein>
<organism>
    <name type="scientific">Homo sapiens</name>
    <name type="common">Human</name>
    <dbReference type="NCBI Taxonomy" id="9606"/>
    <lineage>
        <taxon>Eukaryota</taxon>
        <taxon>Metazoa</taxon>
        <taxon>Chordata</taxon>
        <taxon>Craniata</taxon>
        <taxon>Vertebrata</taxon>
        <taxon>Euteleostomi</taxon>
        <taxon>Mammalia</taxon>
        <taxon>Eutheria</taxon>
        <taxon>Euarchontoglires</taxon>
        <taxon>Primates</taxon>
        <taxon>Haplorrhini</taxon>
        <taxon>Catarrhini</taxon>
        <taxon>Hominidae</taxon>
        <taxon>Homo</taxon>
    </lineage>
</organism>
<keyword id="KW-1064">Adaptive immunity</keyword>
<keyword id="KW-1003">Cell membrane</keyword>
<keyword id="KW-1015">Disulfide bond</keyword>
<keyword id="KW-0391">Immunity</keyword>
<keyword id="KW-1280">Immunoglobulin</keyword>
<keyword id="KW-0393">Immunoglobulin domain</keyword>
<keyword id="KW-0472">Membrane</keyword>
<keyword id="KW-1267">Proteomics identification</keyword>
<keyword id="KW-1185">Reference proteome</keyword>
<keyword id="KW-0964">Secreted</keyword>
<keyword id="KW-0732">Signal</keyword>
<gene>
    <name evidence="5 10" type="primary">IGLV5-45</name>
</gene>
<sequence>MAWTPLLLLFLSHCTGSLSQAVLTQPSSLSASPGASASLTCTLCSGINVGTYRIYWYQQKPGSPPQYLLRYKSDSDKQQGSGVPSRFSGSKDASANAGILLISGLQSEDEADYYCMIWHSSAS</sequence>
<feature type="signal peptide" evidence="2">
    <location>
        <begin position="1"/>
        <end position="19"/>
    </location>
</feature>
<feature type="chain" id="PRO_5001831854" description="Immunoglobulin lambda variable 5-45" evidence="2">
    <location>
        <begin position="20"/>
        <end position="123"/>
    </location>
</feature>
<feature type="domain" description="Ig-like" evidence="3">
    <location>
        <begin position="20"/>
        <end position="123" status="greater than"/>
    </location>
</feature>
<feature type="region of interest" description="Framework-1" evidence="1">
    <location>
        <begin position="20"/>
        <end position="44"/>
    </location>
</feature>
<feature type="region of interest" description="Complementarity-determining-1" evidence="1">
    <location>
        <begin position="45"/>
        <end position="53"/>
    </location>
</feature>
<feature type="region of interest" description="Framework-2" evidence="1">
    <location>
        <begin position="54"/>
        <end position="70"/>
    </location>
</feature>
<feature type="region of interest" description="Disordered" evidence="4">
    <location>
        <begin position="68"/>
        <end position="92"/>
    </location>
</feature>
<feature type="region of interest" description="Complementarity-determining-2" evidence="1">
    <location>
        <begin position="71"/>
        <end position="77"/>
    </location>
</feature>
<feature type="region of interest" description="Framework-3" evidence="1">
    <location>
        <begin position="78"/>
        <end position="115"/>
    </location>
</feature>
<feature type="region of interest" description="Complementarity-determining-3" evidence="1">
    <location>
        <begin position="116"/>
        <end position="123" status="greater than"/>
    </location>
</feature>
<feature type="compositionally biased region" description="Polar residues" evidence="4">
    <location>
        <begin position="78"/>
        <end position="92"/>
    </location>
</feature>
<feature type="disulfide bond" evidence="3">
    <location>
        <begin position="41"/>
        <end position="115"/>
    </location>
</feature>
<feature type="non-terminal residue">
    <location>
        <position position="123"/>
    </location>
</feature>
<reference key="1">
    <citation type="journal article" date="1999" name="Nature">
        <title>The DNA sequence of human chromosome 22.</title>
        <authorList>
            <person name="Dunham I."/>
            <person name="Hunt A.R."/>
            <person name="Collins J.E."/>
            <person name="Bruskiewich R."/>
            <person name="Beare D.M."/>
            <person name="Clamp M."/>
            <person name="Smink L.J."/>
            <person name="Ainscough R."/>
            <person name="Almeida J.P."/>
            <person name="Babbage A.K."/>
            <person name="Bagguley C."/>
            <person name="Bailey J."/>
            <person name="Barlow K.F."/>
            <person name="Bates K.N."/>
            <person name="Beasley O.P."/>
            <person name="Bird C.P."/>
            <person name="Blakey S.E."/>
            <person name="Bridgeman A.M."/>
            <person name="Buck D."/>
            <person name="Burgess J."/>
            <person name="Burrill W.D."/>
            <person name="Burton J."/>
            <person name="Carder C."/>
            <person name="Carter N.P."/>
            <person name="Chen Y."/>
            <person name="Clark G."/>
            <person name="Clegg S.M."/>
            <person name="Cobley V.E."/>
            <person name="Cole C.G."/>
            <person name="Collier R.E."/>
            <person name="Connor R."/>
            <person name="Conroy D."/>
            <person name="Corby N.R."/>
            <person name="Coville G.J."/>
            <person name="Cox A.V."/>
            <person name="Davis J."/>
            <person name="Dawson E."/>
            <person name="Dhami P.D."/>
            <person name="Dockree C."/>
            <person name="Dodsworth S.J."/>
            <person name="Durbin R.M."/>
            <person name="Ellington A.G."/>
            <person name="Evans K.L."/>
            <person name="Fey J.M."/>
            <person name="Fleming K."/>
            <person name="French L."/>
            <person name="Garner A.A."/>
            <person name="Gilbert J.G.R."/>
            <person name="Goward M.E."/>
            <person name="Grafham D.V."/>
            <person name="Griffiths M.N.D."/>
            <person name="Hall C."/>
            <person name="Hall R.E."/>
            <person name="Hall-Tamlyn G."/>
            <person name="Heathcott R.W."/>
            <person name="Ho S."/>
            <person name="Holmes S."/>
            <person name="Hunt S.E."/>
            <person name="Jones M.C."/>
            <person name="Kershaw J."/>
            <person name="Kimberley A.M."/>
            <person name="King A."/>
            <person name="Laird G.K."/>
            <person name="Langford C.F."/>
            <person name="Leversha M.A."/>
            <person name="Lloyd C."/>
            <person name="Lloyd D.M."/>
            <person name="Martyn I.D."/>
            <person name="Mashreghi-Mohammadi M."/>
            <person name="Matthews L.H."/>
            <person name="Mccann O.T."/>
            <person name="Mcclay J."/>
            <person name="Mclaren S."/>
            <person name="McMurray A.A."/>
            <person name="Milne S.A."/>
            <person name="Mortimore B.J."/>
            <person name="Odell C.N."/>
            <person name="Pavitt R."/>
            <person name="Pearce A.V."/>
            <person name="Pearson D."/>
            <person name="Phillimore B.J.C.T."/>
            <person name="Phillips S.H."/>
            <person name="Plumb R.W."/>
            <person name="Ramsay H."/>
            <person name="Ramsey Y."/>
            <person name="Rogers L."/>
            <person name="Ross M.T."/>
            <person name="Scott C.E."/>
            <person name="Sehra H.K."/>
            <person name="Skuce C.D."/>
            <person name="Smalley S."/>
            <person name="Smith M.L."/>
            <person name="Soderlund C."/>
            <person name="Spragon L."/>
            <person name="Steward C.A."/>
            <person name="Sulston J.E."/>
            <person name="Swann R.M."/>
            <person name="Vaudin M."/>
            <person name="Wall M."/>
            <person name="Wallis J.M."/>
            <person name="Whiteley M.N."/>
            <person name="Willey D.L."/>
            <person name="Williams L."/>
            <person name="Williams S.A."/>
            <person name="Williamson H."/>
            <person name="Wilmer T.E."/>
            <person name="Wilming L."/>
            <person name="Wright C.L."/>
            <person name="Hubbard T."/>
            <person name="Bentley D.R."/>
            <person name="Beck S."/>
            <person name="Rogers J."/>
            <person name="Shimizu N."/>
            <person name="Minoshima S."/>
            <person name="Kawasaki K."/>
            <person name="Sasaki T."/>
            <person name="Asakawa S."/>
            <person name="Kudoh J."/>
            <person name="Shintani A."/>
            <person name="Shibuya K."/>
            <person name="Yoshizaki Y."/>
            <person name="Aoki N."/>
            <person name="Mitsuyama S."/>
            <person name="Roe B.A."/>
            <person name="Chen F."/>
            <person name="Chu L."/>
            <person name="Crabtree J."/>
            <person name="Deschamps S."/>
            <person name="Do A."/>
            <person name="Do T."/>
            <person name="Dorman A."/>
            <person name="Fang F."/>
            <person name="Fu Y."/>
            <person name="Hu P."/>
            <person name="Hua A."/>
            <person name="Kenton S."/>
            <person name="Lai H."/>
            <person name="Lao H.I."/>
            <person name="Lewis J."/>
            <person name="Lewis S."/>
            <person name="Lin S.-P."/>
            <person name="Loh P."/>
            <person name="Malaj E."/>
            <person name="Nguyen T."/>
            <person name="Pan H."/>
            <person name="Phan S."/>
            <person name="Qi S."/>
            <person name="Qian Y."/>
            <person name="Ray L."/>
            <person name="Ren Q."/>
            <person name="Shaull S."/>
            <person name="Sloan D."/>
            <person name="Song L."/>
            <person name="Wang Q."/>
            <person name="Wang Y."/>
            <person name="Wang Z."/>
            <person name="White J."/>
            <person name="Willingham D."/>
            <person name="Wu H."/>
            <person name="Yao Z."/>
            <person name="Zhan M."/>
            <person name="Zhang G."/>
            <person name="Chissoe S."/>
            <person name="Murray J."/>
            <person name="Miller N."/>
            <person name="Minx P."/>
            <person name="Fulton R."/>
            <person name="Johnson D."/>
            <person name="Bemis G."/>
            <person name="Bentley D."/>
            <person name="Bradshaw H."/>
            <person name="Bourne S."/>
            <person name="Cordes M."/>
            <person name="Du Z."/>
            <person name="Fulton L."/>
            <person name="Goela D."/>
            <person name="Graves T."/>
            <person name="Hawkins J."/>
            <person name="Hinds K."/>
            <person name="Kemp K."/>
            <person name="Latreille P."/>
            <person name="Layman D."/>
            <person name="Ozersky P."/>
            <person name="Rohlfing T."/>
            <person name="Scheet P."/>
            <person name="Walker C."/>
            <person name="Wamsley A."/>
            <person name="Wohldmann P."/>
            <person name="Pepin K."/>
            <person name="Nelson J."/>
            <person name="Korf I."/>
            <person name="Bedell J.A."/>
            <person name="Hillier L.W."/>
            <person name="Mardis E."/>
            <person name="Waterston R."/>
            <person name="Wilson R."/>
            <person name="Emanuel B.S."/>
            <person name="Shaikh T."/>
            <person name="Kurahashi H."/>
            <person name="Saitta S."/>
            <person name="Budarf M.L."/>
            <person name="McDermid H.E."/>
            <person name="Johnson A."/>
            <person name="Wong A.C.C."/>
            <person name="Morrow B.E."/>
            <person name="Edelmann L."/>
            <person name="Kim U.J."/>
            <person name="Shizuya H."/>
            <person name="Simon M.I."/>
            <person name="Dumanski J.P."/>
            <person name="Peyrard M."/>
            <person name="Kedra D."/>
            <person name="Seroussi E."/>
            <person name="Fransson I."/>
            <person name="Tapia I."/>
            <person name="Bruder C.E."/>
            <person name="O'Brien K.P."/>
            <person name="Wilkinson P."/>
            <person name="Bodenteich A."/>
            <person name="Hartman K."/>
            <person name="Hu X."/>
            <person name="Khan A.S."/>
            <person name="Lane L."/>
            <person name="Tilahun Y."/>
            <person name="Wright H."/>
        </authorList>
    </citation>
    <scope>NUCLEOTIDE SEQUENCE [LARGE SCALE GENOMIC DNA] (IMGT ALLELE IGLV5-45*04)</scope>
</reference>
<reference key="2">
    <citation type="journal article" date="2001" name="Exp. Clin. Immunogenet.">
        <title>Nomenclature of the human immunoglobulin lambda (IGL) genes.</title>
        <authorList>
            <person name="Lefranc M.P."/>
        </authorList>
    </citation>
    <scope>NOMENCLATURE</scope>
</reference>
<reference key="3">
    <citation type="book" date="2001" name="The Immunoglobulin FactsBook.">
        <title>The Immunoglobulin FactsBook.</title>
        <editorList>
            <person name="Lefranc M.P."/>
            <person name="Lefranc G."/>
        </editorList>
        <authorList>
            <person name="Lefranc M.P."/>
            <person name="Lefranc G."/>
        </authorList>
    </citation>
    <scope>NOMENCLATURE</scope>
</reference>
<reference key="4">
    <citation type="journal article" date="2007" name="Annu. Rev. Genet.">
        <title>Immunoglobulin somatic hypermutation.</title>
        <authorList>
            <person name="Teng G."/>
            <person name="Papavasiliou F.N."/>
        </authorList>
    </citation>
    <scope>REVIEW ON SOMATIC HYPERMUTATION</scope>
</reference>
<reference key="5">
    <citation type="journal article" date="2010" name="J. Allergy Clin. Immunol.">
        <title>Structure and function of immunoglobulins.</title>
        <authorList>
            <person name="Schroeder H.W. Jr."/>
            <person name="Cavacini L."/>
        </authorList>
    </citation>
    <scope>REVIEW ON IMMUNOGLOBULINS</scope>
</reference>
<reference key="6">
    <citation type="journal article" date="2012" name="Nat. Rev. Immunol.">
        <title>Molecular programming of B cell memory.</title>
        <authorList>
            <person name="McHeyzer-Williams M."/>
            <person name="Okitsu S."/>
            <person name="Wang N."/>
            <person name="McHeyzer-Williams L."/>
        </authorList>
    </citation>
    <scope>REVIEW ON FUNCTION</scope>
</reference>
<reference key="7">
    <citation type="journal article" date="2014" name="Front. Immunol.">
        <title>Immunoglobulin and T Cell Receptor Genes: IMGT((R)) and the Birth and Rise of Immunoinformatics.</title>
        <authorList>
            <person name="Lefranc M.P."/>
        </authorList>
    </citation>
    <scope>NOMENCLATURE</scope>
</reference>
<comment type="function">
    <text evidence="6 7 8 9">V region of the variable domain of immunoglobulin light chains that participates in the antigen recognition (PubMed:24600447). Immunoglobulins, also known as antibodies, are membrane-bound or secreted glycoproteins produced by B lymphocytes. In the recognition phase of humoral immunity, the membrane-bound immunoglobulins serve as receptors which, upon binding of a specific antigen, trigger the clonal expansion and differentiation of B lymphocytes into immunoglobulins-secreting plasma cells. Secreted immunoglobulins mediate the effector phase of humoral immunity, which results in the elimination of bound antigens (PubMed:20176268, PubMed:22158414). The antigen binding site is formed by the variable domain of one heavy chain, together with that of its associated light chain. Thus, each immunoglobulin has two antigen binding sites with remarkable affinity for a particular antigen. The variable domains are assembled by a process called V-(D)-J rearrangement and can then be subjected to somatic hypermutations which, after exposure to antigen and selection, allow affinity maturation for a particular antigen (PubMed:17576170, PubMed:20176268).</text>
</comment>
<comment type="subunit">
    <text evidence="7">Immunoglobulins are composed of two identical heavy chains and two identical light chains; disulfide-linked.</text>
</comment>
<comment type="subcellular location">
    <subcellularLocation>
        <location evidence="7 8">Secreted</location>
    </subcellularLocation>
    <subcellularLocation>
        <location evidence="7 8">Cell membrane</location>
    </subcellularLocation>
</comment>
<comment type="polymorphism">
    <text>There are several alleles. The sequence shown is that of IMGT allele IGLV5-45*04.</text>
</comment>
<comment type="caution">
    <text evidence="11">For an example of a full-length immunoglobulin lambda light chain see AC P0DOX8.</text>
</comment>
<accession>A0A087WSX0</accession>
<evidence type="ECO:0000250" key="1">
    <source>
        <dbReference type="UniProtKB" id="P01721"/>
    </source>
</evidence>
<evidence type="ECO:0000255" key="2"/>
<evidence type="ECO:0000255" key="3">
    <source>
        <dbReference type="PROSITE-ProRule" id="PRU00114"/>
    </source>
</evidence>
<evidence type="ECO:0000256" key="4">
    <source>
        <dbReference type="SAM" id="MobiDB-lite"/>
    </source>
</evidence>
<evidence type="ECO:0000303" key="5">
    <source>
    </source>
</evidence>
<evidence type="ECO:0000303" key="6">
    <source>
    </source>
</evidence>
<evidence type="ECO:0000303" key="7">
    <source>
    </source>
</evidence>
<evidence type="ECO:0000303" key="8">
    <source>
    </source>
</evidence>
<evidence type="ECO:0000303" key="9">
    <source>
    </source>
</evidence>
<evidence type="ECO:0000303" key="10">
    <source ref="3"/>
</evidence>
<evidence type="ECO:0000305" key="11"/>